<sequence>MGKRKANHTISGMNAASAQGQGTGYNEEFANEPFTPAERQNNKKRKKNQ</sequence>
<gene>
    <name evidence="1" type="primary">sspO</name>
    <name type="ordered locus">BC_3617</name>
</gene>
<organism>
    <name type="scientific">Bacillus cereus (strain ATCC 14579 / DSM 31 / CCUG 7414 / JCM 2152 / NBRC 15305 / NCIMB 9373 / NCTC 2599 / NRRL B-3711)</name>
    <dbReference type="NCBI Taxonomy" id="226900"/>
    <lineage>
        <taxon>Bacteria</taxon>
        <taxon>Bacillati</taxon>
        <taxon>Bacillota</taxon>
        <taxon>Bacilli</taxon>
        <taxon>Bacillales</taxon>
        <taxon>Bacillaceae</taxon>
        <taxon>Bacillus</taxon>
        <taxon>Bacillus cereus group</taxon>
    </lineage>
</organism>
<keyword id="KW-1185">Reference proteome</keyword>
<keyword id="KW-0749">Sporulation</keyword>
<protein>
    <recommendedName>
        <fullName evidence="1">Small, acid-soluble spore protein O</fullName>
        <shortName evidence="1">SASP O</shortName>
    </recommendedName>
</protein>
<proteinExistence type="inferred from homology"/>
<reference key="1">
    <citation type="journal article" date="2003" name="Nature">
        <title>Genome sequence of Bacillus cereus and comparative analysis with Bacillus anthracis.</title>
        <authorList>
            <person name="Ivanova N."/>
            <person name="Sorokin A."/>
            <person name="Anderson I."/>
            <person name="Galleron N."/>
            <person name="Candelon B."/>
            <person name="Kapatral V."/>
            <person name="Bhattacharyya A."/>
            <person name="Reznik G."/>
            <person name="Mikhailova N."/>
            <person name="Lapidus A."/>
            <person name="Chu L."/>
            <person name="Mazur M."/>
            <person name="Goltsman E."/>
            <person name="Larsen N."/>
            <person name="D'Souza M."/>
            <person name="Walunas T."/>
            <person name="Grechkin Y."/>
            <person name="Pusch G."/>
            <person name="Haselkorn R."/>
            <person name="Fonstein M."/>
            <person name="Ehrlich S.D."/>
            <person name="Overbeek R."/>
            <person name="Kyrpides N.C."/>
        </authorList>
    </citation>
    <scope>NUCLEOTIDE SEQUENCE [LARGE SCALE GENOMIC DNA]</scope>
    <source>
        <strain>ATCC 14579 / DSM 31 / CCUG 7414 / JCM 2152 / NBRC 15305 / NCIMB 9373 / NCTC 2599 / NRRL B-3711</strain>
    </source>
</reference>
<name>SSPO_BACCR</name>
<evidence type="ECO:0000255" key="1">
    <source>
        <dbReference type="HAMAP-Rule" id="MF_00665"/>
    </source>
</evidence>
<evidence type="ECO:0000256" key="2">
    <source>
        <dbReference type="SAM" id="MobiDB-lite"/>
    </source>
</evidence>
<feature type="chain" id="PRO_0000217205" description="Small, acid-soluble spore protein O">
    <location>
        <begin position="1"/>
        <end position="49"/>
    </location>
</feature>
<feature type="region of interest" description="Disordered" evidence="2">
    <location>
        <begin position="1"/>
        <end position="49"/>
    </location>
</feature>
<feature type="compositionally biased region" description="Polar residues" evidence="2">
    <location>
        <begin position="8"/>
        <end position="20"/>
    </location>
</feature>
<comment type="subcellular location">
    <subcellularLocation>
        <location evidence="1">Spore core</location>
    </subcellularLocation>
</comment>
<comment type="induction">
    <text evidence="1">Expressed only in the forespore compartment of sporulating cells.</text>
</comment>
<comment type="similarity">
    <text evidence="1">Belongs to the SspO family.</text>
</comment>
<accession>Q81AF5</accession>
<dbReference type="EMBL" id="AE016877">
    <property type="protein sequence ID" value="AAP10548.1"/>
    <property type="molecule type" value="Genomic_DNA"/>
</dbReference>
<dbReference type="RefSeq" id="NP_833347.1">
    <property type="nucleotide sequence ID" value="NC_004722.1"/>
</dbReference>
<dbReference type="RefSeq" id="WP_000518056.1">
    <property type="nucleotide sequence ID" value="NC_004722.1"/>
</dbReference>
<dbReference type="STRING" id="226900.BC_3617"/>
<dbReference type="KEGG" id="bce:BC3617"/>
<dbReference type="PATRIC" id="fig|226900.8.peg.3715"/>
<dbReference type="HOGENOM" id="CLU_206342_0_0_9"/>
<dbReference type="OrthoDB" id="2692139at2"/>
<dbReference type="Proteomes" id="UP000001417">
    <property type="component" value="Chromosome"/>
</dbReference>
<dbReference type="GO" id="GO:0042601">
    <property type="term" value="C:endospore-forming forespore"/>
    <property type="evidence" value="ECO:0007669"/>
    <property type="project" value="InterPro"/>
</dbReference>
<dbReference type="GO" id="GO:0030436">
    <property type="term" value="P:asexual sporulation"/>
    <property type="evidence" value="ECO:0007669"/>
    <property type="project" value="UniProtKB-UniRule"/>
</dbReference>
<dbReference type="GO" id="GO:0030435">
    <property type="term" value="P:sporulation resulting in formation of a cellular spore"/>
    <property type="evidence" value="ECO:0007669"/>
    <property type="project" value="UniProtKB-KW"/>
</dbReference>
<dbReference type="HAMAP" id="MF_00665">
    <property type="entry name" value="SspO"/>
    <property type="match status" value="1"/>
</dbReference>
<dbReference type="InterPro" id="IPR012613">
    <property type="entry name" value="SASP_SspO"/>
</dbReference>
<dbReference type="NCBIfam" id="TIGR02864">
    <property type="entry name" value="spore_sspO"/>
    <property type="match status" value="1"/>
</dbReference>
<dbReference type="Pfam" id="PF08175">
    <property type="entry name" value="SspO"/>
    <property type="match status" value="1"/>
</dbReference>